<dbReference type="EC" id="3.6.1.7" evidence="1"/>
<dbReference type="EMBL" id="AE014613">
    <property type="protein sequence ID" value="AAO69456.1"/>
    <property type="molecule type" value="Genomic_DNA"/>
</dbReference>
<dbReference type="EMBL" id="AL513382">
    <property type="protein sequence ID" value="CAD08210.1"/>
    <property type="molecule type" value="Genomic_DNA"/>
</dbReference>
<dbReference type="RefSeq" id="NP_455581.1">
    <property type="nucleotide sequence ID" value="NC_003198.1"/>
</dbReference>
<dbReference type="RefSeq" id="WP_000072884.1">
    <property type="nucleotide sequence ID" value="NZ_WSUR01000091.1"/>
</dbReference>
<dbReference type="SMR" id="Q8XGT4"/>
<dbReference type="STRING" id="220341.gene:17585088"/>
<dbReference type="KEGG" id="stt:t1836"/>
<dbReference type="KEGG" id="sty:STY1110"/>
<dbReference type="PATRIC" id="fig|220341.7.peg.1114"/>
<dbReference type="eggNOG" id="COG1254">
    <property type="taxonomic scope" value="Bacteria"/>
</dbReference>
<dbReference type="HOGENOM" id="CLU_141932_1_2_6"/>
<dbReference type="OMA" id="VGFRWSM"/>
<dbReference type="OrthoDB" id="5295388at2"/>
<dbReference type="Proteomes" id="UP000000541">
    <property type="component" value="Chromosome"/>
</dbReference>
<dbReference type="Proteomes" id="UP000002670">
    <property type="component" value="Chromosome"/>
</dbReference>
<dbReference type="GO" id="GO:0003998">
    <property type="term" value="F:acylphosphatase activity"/>
    <property type="evidence" value="ECO:0007669"/>
    <property type="project" value="UniProtKB-UniRule"/>
</dbReference>
<dbReference type="FunFam" id="3.30.70.100:FF:000012">
    <property type="entry name" value="Acylphosphatase"/>
    <property type="match status" value="1"/>
</dbReference>
<dbReference type="Gene3D" id="3.30.70.100">
    <property type="match status" value="1"/>
</dbReference>
<dbReference type="HAMAP" id="MF_01450">
    <property type="entry name" value="Acylphosphatase_entero"/>
    <property type="match status" value="1"/>
</dbReference>
<dbReference type="InterPro" id="IPR020456">
    <property type="entry name" value="Acylphosphatase"/>
</dbReference>
<dbReference type="InterPro" id="IPR001792">
    <property type="entry name" value="Acylphosphatase-like_dom"/>
</dbReference>
<dbReference type="InterPro" id="IPR036046">
    <property type="entry name" value="Acylphosphatase-like_dom_sf"/>
</dbReference>
<dbReference type="InterPro" id="IPR028627">
    <property type="entry name" value="Acylphosphatase_bac"/>
</dbReference>
<dbReference type="InterPro" id="IPR017968">
    <property type="entry name" value="Acylphosphatase_CS"/>
</dbReference>
<dbReference type="NCBIfam" id="NF011000">
    <property type="entry name" value="PRK14426.1"/>
    <property type="match status" value="1"/>
</dbReference>
<dbReference type="PANTHER" id="PTHR47268">
    <property type="entry name" value="ACYLPHOSPHATASE"/>
    <property type="match status" value="1"/>
</dbReference>
<dbReference type="PANTHER" id="PTHR47268:SF4">
    <property type="entry name" value="ACYLPHOSPHATASE"/>
    <property type="match status" value="1"/>
</dbReference>
<dbReference type="Pfam" id="PF00708">
    <property type="entry name" value="Acylphosphatase"/>
    <property type="match status" value="1"/>
</dbReference>
<dbReference type="PRINTS" id="PR00112">
    <property type="entry name" value="ACYLPHPHTASE"/>
</dbReference>
<dbReference type="SUPFAM" id="SSF54975">
    <property type="entry name" value="Acylphosphatase/BLUF domain-like"/>
    <property type="match status" value="1"/>
</dbReference>
<dbReference type="PROSITE" id="PS00150">
    <property type="entry name" value="ACYLPHOSPHATASE_1"/>
    <property type="match status" value="1"/>
</dbReference>
<dbReference type="PROSITE" id="PS00151">
    <property type="entry name" value="ACYLPHOSPHATASE_2"/>
    <property type="match status" value="1"/>
</dbReference>
<dbReference type="PROSITE" id="PS51160">
    <property type="entry name" value="ACYLPHOSPHATASE_3"/>
    <property type="match status" value="1"/>
</dbReference>
<comment type="catalytic activity">
    <reaction evidence="1">
        <text>an acyl phosphate + H2O = a carboxylate + phosphate + H(+)</text>
        <dbReference type="Rhea" id="RHEA:14965"/>
        <dbReference type="ChEBI" id="CHEBI:15377"/>
        <dbReference type="ChEBI" id="CHEBI:15378"/>
        <dbReference type="ChEBI" id="CHEBI:29067"/>
        <dbReference type="ChEBI" id="CHEBI:43474"/>
        <dbReference type="ChEBI" id="CHEBI:59918"/>
        <dbReference type="EC" id="3.6.1.7"/>
    </reaction>
</comment>
<comment type="similarity">
    <text evidence="1">Belongs to the acylphosphatase family.</text>
</comment>
<proteinExistence type="inferred from homology"/>
<protein>
    <recommendedName>
        <fullName evidence="1">Acylphosphatase</fullName>
        <ecNumber evidence="1">3.6.1.7</ecNumber>
    </recommendedName>
    <alternativeName>
        <fullName evidence="1">Acylphosphate phosphohydrolase</fullName>
    </alternativeName>
</protein>
<reference key="1">
    <citation type="journal article" date="2003" name="J. Bacteriol.">
        <title>Comparative genomics of Salmonella enterica serovar Typhi strains Ty2 and CT18.</title>
        <authorList>
            <person name="Deng W."/>
            <person name="Liou S.-R."/>
            <person name="Plunkett G. III"/>
            <person name="Mayhew G.F."/>
            <person name="Rose D.J."/>
            <person name="Burland V."/>
            <person name="Kodoyianni V."/>
            <person name="Schwartz D.C."/>
            <person name="Blattner F.R."/>
        </authorList>
    </citation>
    <scope>NUCLEOTIDE SEQUENCE [LARGE SCALE GENOMIC DNA]</scope>
    <source>
        <strain>ATCC 700931 / Ty2</strain>
    </source>
</reference>
<reference key="2">
    <citation type="journal article" date="2001" name="Nature">
        <title>Complete genome sequence of a multiple drug resistant Salmonella enterica serovar Typhi CT18.</title>
        <authorList>
            <person name="Parkhill J."/>
            <person name="Dougan G."/>
            <person name="James K.D."/>
            <person name="Thomson N.R."/>
            <person name="Pickard D."/>
            <person name="Wain J."/>
            <person name="Churcher C.M."/>
            <person name="Mungall K.L."/>
            <person name="Bentley S.D."/>
            <person name="Holden M.T.G."/>
            <person name="Sebaihia M."/>
            <person name="Baker S."/>
            <person name="Basham D."/>
            <person name="Brooks K."/>
            <person name="Chillingworth T."/>
            <person name="Connerton P."/>
            <person name="Cronin A."/>
            <person name="Davis P."/>
            <person name="Davies R.M."/>
            <person name="Dowd L."/>
            <person name="White N."/>
            <person name="Farrar J."/>
            <person name="Feltwell T."/>
            <person name="Hamlin N."/>
            <person name="Haque A."/>
            <person name="Hien T.T."/>
            <person name="Holroyd S."/>
            <person name="Jagels K."/>
            <person name="Krogh A."/>
            <person name="Larsen T.S."/>
            <person name="Leather S."/>
            <person name="Moule S."/>
            <person name="O'Gaora P."/>
            <person name="Parry C."/>
            <person name="Quail M.A."/>
            <person name="Rutherford K.M."/>
            <person name="Simmonds M."/>
            <person name="Skelton J."/>
            <person name="Stevens K."/>
            <person name="Whitehead S."/>
            <person name="Barrell B.G."/>
        </authorList>
    </citation>
    <scope>NUCLEOTIDE SEQUENCE [LARGE SCALE GENOMIC DNA]</scope>
    <source>
        <strain>CT18</strain>
    </source>
</reference>
<feature type="chain" id="PRO_0000326797" description="Acylphosphatase">
    <location>
        <begin position="1"/>
        <end position="93"/>
    </location>
</feature>
<feature type="domain" description="Acylphosphatase-like" evidence="1">
    <location>
        <begin position="5"/>
        <end position="93"/>
    </location>
</feature>
<feature type="active site" evidence="1">
    <location>
        <position position="20"/>
    </location>
</feature>
<feature type="active site" evidence="1">
    <location>
        <position position="38"/>
    </location>
</feature>
<feature type="disulfide bond" evidence="1">
    <location>
        <begin position="5"/>
        <end position="49"/>
    </location>
</feature>
<evidence type="ECO:0000255" key="1">
    <source>
        <dbReference type="HAMAP-Rule" id="MF_01450"/>
    </source>
</evidence>
<organism>
    <name type="scientific">Salmonella typhi</name>
    <dbReference type="NCBI Taxonomy" id="90370"/>
    <lineage>
        <taxon>Bacteria</taxon>
        <taxon>Pseudomonadati</taxon>
        <taxon>Pseudomonadota</taxon>
        <taxon>Gammaproteobacteria</taxon>
        <taxon>Enterobacterales</taxon>
        <taxon>Enterobacteriaceae</taxon>
        <taxon>Salmonella</taxon>
    </lineage>
</organism>
<accession>Q8XGT4</accession>
<accession>Q7AN22</accession>
<gene>
    <name evidence="1" type="primary">yccX</name>
    <name type="ordered locus">STY1110</name>
    <name type="ordered locus">t1836</name>
</gene>
<name>ACYP_SALTI</name>
<sequence length="93" mass="10329">MSNVCIIAWVYGRVQGVGFRYTTQHEAQRLGLTGYAKNMDDGSVEVVACGDAAQVEKLIKWLKEGGPRSARVDKILTEPHSPRETLTGFSIRY</sequence>
<keyword id="KW-1015">Disulfide bond</keyword>
<keyword id="KW-0378">Hydrolase</keyword>